<gene>
    <name type="primary">ATG18</name>
    <name type="ORF">UMAG_04932</name>
</gene>
<dbReference type="EMBL" id="CM003154">
    <property type="protein sequence ID" value="KIS67063.1"/>
    <property type="molecule type" value="Genomic_DNA"/>
</dbReference>
<dbReference type="RefSeq" id="XP_011391251.1">
    <property type="nucleotide sequence ID" value="XM_011392949.1"/>
</dbReference>
<dbReference type="SMR" id="Q4P4N1"/>
<dbReference type="FunCoup" id="Q4P4N1">
    <property type="interactions" value="250"/>
</dbReference>
<dbReference type="STRING" id="237631.Q4P4N1"/>
<dbReference type="EnsemblFungi" id="KIS67063">
    <property type="protein sequence ID" value="KIS67063"/>
    <property type="gene ID" value="UMAG_04932"/>
</dbReference>
<dbReference type="GeneID" id="23564962"/>
<dbReference type="KEGG" id="uma:UMAG_04932"/>
<dbReference type="VEuPathDB" id="FungiDB:UMAG_04932"/>
<dbReference type="eggNOG" id="KOG2110">
    <property type="taxonomic scope" value="Eukaryota"/>
</dbReference>
<dbReference type="HOGENOM" id="CLU_025895_5_2_1"/>
<dbReference type="InParanoid" id="Q4P4N1"/>
<dbReference type="OMA" id="NIAILEM"/>
<dbReference type="OrthoDB" id="1667587at2759"/>
<dbReference type="Proteomes" id="UP000000561">
    <property type="component" value="Chromosome 15"/>
</dbReference>
<dbReference type="GO" id="GO:0005829">
    <property type="term" value="C:cytosol"/>
    <property type="evidence" value="ECO:0000318"/>
    <property type="project" value="GO_Central"/>
</dbReference>
<dbReference type="GO" id="GO:0010008">
    <property type="term" value="C:endosome membrane"/>
    <property type="evidence" value="ECO:0007669"/>
    <property type="project" value="UniProtKB-SubCell"/>
</dbReference>
<dbReference type="GO" id="GO:0000329">
    <property type="term" value="C:fungal-type vacuole membrane"/>
    <property type="evidence" value="ECO:0000318"/>
    <property type="project" value="GO_Central"/>
</dbReference>
<dbReference type="GO" id="GO:0034045">
    <property type="term" value="C:phagophore assembly site membrane"/>
    <property type="evidence" value="ECO:0000318"/>
    <property type="project" value="GO_Central"/>
</dbReference>
<dbReference type="GO" id="GO:0080025">
    <property type="term" value="F:phosphatidylinositol-3,5-bisphosphate binding"/>
    <property type="evidence" value="ECO:0000318"/>
    <property type="project" value="GO_Central"/>
</dbReference>
<dbReference type="GO" id="GO:0032266">
    <property type="term" value="F:phosphatidylinositol-3-phosphate binding"/>
    <property type="evidence" value="ECO:0000318"/>
    <property type="project" value="GO_Central"/>
</dbReference>
<dbReference type="GO" id="GO:0030674">
    <property type="term" value="F:protein-macromolecule adaptor activity"/>
    <property type="evidence" value="ECO:0000318"/>
    <property type="project" value="GO_Central"/>
</dbReference>
<dbReference type="GO" id="GO:0000422">
    <property type="term" value="P:autophagy of mitochondrion"/>
    <property type="evidence" value="ECO:0000318"/>
    <property type="project" value="GO_Central"/>
</dbReference>
<dbReference type="GO" id="GO:0061723">
    <property type="term" value="P:glycophagy"/>
    <property type="evidence" value="ECO:0000318"/>
    <property type="project" value="GO_Central"/>
</dbReference>
<dbReference type="GO" id="GO:0044804">
    <property type="term" value="P:nucleophagy"/>
    <property type="evidence" value="ECO:0000318"/>
    <property type="project" value="GO_Central"/>
</dbReference>
<dbReference type="GO" id="GO:0000425">
    <property type="term" value="P:pexophagy"/>
    <property type="evidence" value="ECO:0000318"/>
    <property type="project" value="GO_Central"/>
</dbReference>
<dbReference type="GO" id="GO:0034497">
    <property type="term" value="P:protein localization to phagophore assembly site"/>
    <property type="evidence" value="ECO:0000318"/>
    <property type="project" value="GO_Central"/>
</dbReference>
<dbReference type="GO" id="GO:0015031">
    <property type="term" value="P:protein transport"/>
    <property type="evidence" value="ECO:0007669"/>
    <property type="project" value="UniProtKB-KW"/>
</dbReference>
<dbReference type="FunFam" id="2.130.10.10:FF:000965">
    <property type="entry name" value="Autophagy-like protein 18 Atg18"/>
    <property type="match status" value="1"/>
</dbReference>
<dbReference type="Gene3D" id="2.130.10.10">
    <property type="entry name" value="YVTN repeat-like/Quinoprotein amine dehydrogenase"/>
    <property type="match status" value="1"/>
</dbReference>
<dbReference type="InterPro" id="IPR048720">
    <property type="entry name" value="PROPPIN"/>
</dbReference>
<dbReference type="InterPro" id="IPR015943">
    <property type="entry name" value="WD40/YVTN_repeat-like_dom_sf"/>
</dbReference>
<dbReference type="InterPro" id="IPR036322">
    <property type="entry name" value="WD40_repeat_dom_sf"/>
</dbReference>
<dbReference type="InterPro" id="IPR001680">
    <property type="entry name" value="WD40_rpt"/>
</dbReference>
<dbReference type="PANTHER" id="PTHR11227">
    <property type="entry name" value="WD-REPEAT PROTEIN INTERACTING WITH PHOSPHOINOSIDES WIPI -RELATED"/>
    <property type="match status" value="1"/>
</dbReference>
<dbReference type="Pfam" id="PF21032">
    <property type="entry name" value="PROPPIN"/>
    <property type="match status" value="2"/>
</dbReference>
<dbReference type="SMART" id="SM00320">
    <property type="entry name" value="WD40"/>
    <property type="match status" value="3"/>
</dbReference>
<dbReference type="SUPFAM" id="SSF50978">
    <property type="entry name" value="WD40 repeat-like"/>
    <property type="match status" value="1"/>
</dbReference>
<comment type="function">
    <text evidence="1">The PI(3,5)P2 regulatory complex regulates both the synthesis and turnover of phosphatidylinositol 3,5-bisphosphate (PtdIns(3,5)P2). Necessary for proper vacuole morphology. Plays an important role in osmotically-induced vacuole fragmentation. Required for cytoplasm to vacuole transport (Cvt) vesicle formation, pexophagy and starvation-induced autophagy. Involved in correct ATG9 trafficking to the pre-autophagosomal structure. Might also be involved in premeiotic DNA replication (By similarity).</text>
</comment>
<comment type="subunit">
    <text evidence="1">Component of the PI(3,5)P2 regulatory complex.</text>
</comment>
<comment type="subcellular location">
    <subcellularLocation>
        <location evidence="1">Preautophagosomal structure membrane</location>
        <topology evidence="1">Peripheral membrane protein</topology>
    </subcellularLocation>
    <subcellularLocation>
        <location evidence="1">Vacuole membrane</location>
        <topology evidence="1">Peripheral membrane protein</topology>
    </subcellularLocation>
    <subcellularLocation>
        <location evidence="1">Endosome membrane</location>
        <topology evidence="1">Peripheral membrane protein</topology>
    </subcellularLocation>
</comment>
<comment type="domain">
    <text evidence="1">The N-terminus might form a beta-propeller domain involved in specific binding to phosphatidylinositol 3,5-bisphosphate (PIP2), leading to the association of the protein to the membrane.</text>
</comment>
<comment type="domain">
    <text evidence="2">The L/FRRG motif is essential for the cytoplasm to vacuole transport (Cvt) pathway, for the recruitment of ATG8 and ATG16 to the PAS in nutrient-rich medium, and for its recruitment to and dissociation from the PAS under starvation conditions.</text>
</comment>
<comment type="similarity">
    <text evidence="4">Belongs to the WD repeat PROPPIN family.</text>
</comment>
<keyword id="KW-0072">Autophagy</keyword>
<keyword id="KW-0967">Endosome</keyword>
<keyword id="KW-0472">Membrane</keyword>
<keyword id="KW-0653">Protein transport</keyword>
<keyword id="KW-1185">Reference proteome</keyword>
<keyword id="KW-0677">Repeat</keyword>
<keyword id="KW-0813">Transport</keyword>
<keyword id="KW-0926">Vacuole</keyword>
<keyword id="KW-0853">WD repeat</keyword>
<feature type="chain" id="PRO_0000318009" description="Autophagy-related protein 18">
    <location>
        <begin position="1"/>
        <end position="453"/>
    </location>
</feature>
<feature type="repeat" description="WD 1">
    <location>
        <begin position="9"/>
        <end position="49"/>
    </location>
</feature>
<feature type="repeat" description="WD 2">
    <location>
        <begin position="204"/>
        <end position="244"/>
    </location>
</feature>
<feature type="repeat" description="WD 3">
    <location>
        <begin position="249"/>
        <end position="288"/>
    </location>
</feature>
<feature type="region of interest" description="Disordered" evidence="3">
    <location>
        <begin position="284"/>
        <end position="324"/>
    </location>
</feature>
<feature type="short sequence motif" description="L/FRRG motif" evidence="2">
    <location>
        <begin position="245"/>
        <end position="249"/>
    </location>
</feature>
<feature type="compositionally biased region" description="Low complexity" evidence="3">
    <location>
        <begin position="289"/>
        <end position="320"/>
    </location>
</feature>
<protein>
    <recommendedName>
        <fullName>Autophagy-related protein 18</fullName>
    </recommendedName>
</protein>
<proteinExistence type="inferred from homology"/>
<evidence type="ECO:0000250" key="1"/>
<evidence type="ECO:0000250" key="2">
    <source>
        <dbReference type="UniProtKB" id="P43601"/>
    </source>
</evidence>
<evidence type="ECO:0000256" key="3">
    <source>
        <dbReference type="SAM" id="MobiDB-lite"/>
    </source>
</evidence>
<evidence type="ECO:0000305" key="4"/>
<name>ATG18_MYCMD</name>
<organism>
    <name type="scientific">Mycosarcoma maydis</name>
    <name type="common">Corn smut fungus</name>
    <name type="synonym">Ustilago maydis</name>
    <dbReference type="NCBI Taxonomy" id="5270"/>
    <lineage>
        <taxon>Eukaryota</taxon>
        <taxon>Fungi</taxon>
        <taxon>Dikarya</taxon>
        <taxon>Basidiomycota</taxon>
        <taxon>Ustilaginomycotina</taxon>
        <taxon>Ustilaginomycetes</taxon>
        <taxon>Ustilaginales</taxon>
        <taxon>Ustilaginaceae</taxon>
        <taxon>Mycosarcoma</taxon>
    </lineage>
</organism>
<sequence>MSSSSLPTKSSNALLSVNFNQDHSCIAVGTRDGYSITNCEPFGRVYTNNAGPTSLVEMLFCTSLVALVATSDTDPKSNASPRRLQIVNTKRQSVICELLFPTAILGVKLNRRRLVVVLEQEIYIYDISNMKLLHTIETSPNPMAICALSPSSENCFLAYPSPVASPTSPFSNSGASSSAEANTTAGDVLIFDLLSLSVTNVIQAHKTPISALALNATGTLLATASDKGTVIRVFSIPAAQKLHQFRRGSYAARIYSLNFNAVSTLLAVSSDTETVHIFKLSSGAGAGAKGRSSSNGGESPSLNSFDGSSDSSSPPGSTTNATRGGYEAFMGKHKAAKSNGISGTLRRRSMALGRGITGSVGGYLPNSLTEMWEPSRDFAFLKLPSQGVSSVVALSSTTPHVMVVTSEGYFYSYAIDLEHGGECILMKQYSLIDPDLDTTSTARSDTATPSLAD</sequence>
<reference key="1">
    <citation type="journal article" date="2006" name="Nature">
        <title>Insights from the genome of the biotrophic fungal plant pathogen Ustilago maydis.</title>
        <authorList>
            <person name="Kaemper J."/>
            <person name="Kahmann R."/>
            <person name="Boelker M."/>
            <person name="Ma L.-J."/>
            <person name="Brefort T."/>
            <person name="Saville B.J."/>
            <person name="Banuett F."/>
            <person name="Kronstad J.W."/>
            <person name="Gold S.E."/>
            <person name="Mueller O."/>
            <person name="Perlin M.H."/>
            <person name="Woesten H.A.B."/>
            <person name="de Vries R."/>
            <person name="Ruiz-Herrera J."/>
            <person name="Reynaga-Pena C.G."/>
            <person name="Snetselaar K."/>
            <person name="McCann M."/>
            <person name="Perez-Martin J."/>
            <person name="Feldbruegge M."/>
            <person name="Basse C.W."/>
            <person name="Steinberg G."/>
            <person name="Ibeas J.I."/>
            <person name="Holloman W."/>
            <person name="Guzman P."/>
            <person name="Farman M.L."/>
            <person name="Stajich J.E."/>
            <person name="Sentandreu R."/>
            <person name="Gonzalez-Prieto J.M."/>
            <person name="Kennell J.C."/>
            <person name="Molina L."/>
            <person name="Schirawski J."/>
            <person name="Mendoza-Mendoza A."/>
            <person name="Greilinger D."/>
            <person name="Muench K."/>
            <person name="Roessel N."/>
            <person name="Scherer M."/>
            <person name="Vranes M."/>
            <person name="Ladendorf O."/>
            <person name="Vincon V."/>
            <person name="Fuchs U."/>
            <person name="Sandrock B."/>
            <person name="Meng S."/>
            <person name="Ho E.C.H."/>
            <person name="Cahill M.J."/>
            <person name="Boyce K.J."/>
            <person name="Klose J."/>
            <person name="Klosterman S.J."/>
            <person name="Deelstra H.J."/>
            <person name="Ortiz-Castellanos L."/>
            <person name="Li W."/>
            <person name="Sanchez-Alonso P."/>
            <person name="Schreier P.H."/>
            <person name="Haeuser-Hahn I."/>
            <person name="Vaupel M."/>
            <person name="Koopmann E."/>
            <person name="Friedrich G."/>
            <person name="Voss H."/>
            <person name="Schlueter T."/>
            <person name="Margolis J."/>
            <person name="Platt D."/>
            <person name="Swimmer C."/>
            <person name="Gnirke A."/>
            <person name="Chen F."/>
            <person name="Vysotskaia V."/>
            <person name="Mannhaupt G."/>
            <person name="Gueldener U."/>
            <person name="Muensterkoetter M."/>
            <person name="Haase D."/>
            <person name="Oesterheld M."/>
            <person name="Mewes H.-W."/>
            <person name="Mauceli E.W."/>
            <person name="DeCaprio D."/>
            <person name="Wade C.M."/>
            <person name="Butler J."/>
            <person name="Young S.K."/>
            <person name="Jaffe D.B."/>
            <person name="Calvo S.E."/>
            <person name="Nusbaum C."/>
            <person name="Galagan J.E."/>
            <person name="Birren B.W."/>
        </authorList>
    </citation>
    <scope>NUCLEOTIDE SEQUENCE [LARGE SCALE GENOMIC DNA]</scope>
    <source>
        <strain>DSM 14603 / FGSC 9021 / UM521</strain>
    </source>
</reference>
<reference key="2">
    <citation type="submission" date="2014-09" db="EMBL/GenBank/DDBJ databases">
        <authorList>
            <person name="Gueldener U."/>
            <person name="Muensterkoetter M."/>
            <person name="Walter M.C."/>
            <person name="Mannhaupt G."/>
            <person name="Kahmann R."/>
        </authorList>
    </citation>
    <scope>GENOME REANNOTATION</scope>
    <source>
        <strain>DSM 14603 / FGSC 9021 / UM521</strain>
    </source>
</reference>
<accession>Q4P4N1</accession>
<accession>A0A0D1CJN2</accession>